<evidence type="ECO:0000255" key="1">
    <source>
        <dbReference type="HAMAP-Rule" id="MF_01050"/>
    </source>
</evidence>
<sequence>MDHLPMPKFGPLAGLRVVFSGIEIAGPFAGQMFAEWGAEVIWIENVAWADTIRVQPNYPQLSRRNLHALSLNIFKDEGREAFLKLMETTDIFIEASKGPAFARRGITDEVLWQHNPKLVIAHLSGFGQYGTEEYTNLPAYNTIAQAFSGYLIQNGDVDQPMPAFPYTADYFSGLTATTAALAALHKVRETGKGESIDIAMYEVMLRMGQYFMMDYFNGGEMCPRMTKGKDPYYAGCGLYKCADGYIVMELVGITQIAECFKDIGLAHLLGTPEIPEGTQLIHRIECPYGPLVEEKLDAWLAAHTIAEVKERFAELNIACAKVLTVPELESNPQYVARESITQWQTMDGRTCKGPNIMPKFKNNPGQIWRGMPSHGMDTAAILKNIGYSENDIQELVSKGLAKVED</sequence>
<protein>
    <recommendedName>
        <fullName evidence="1">L-carnitine CoA-transferase</fullName>
        <ecNumber evidence="1">2.8.3.21</ecNumber>
    </recommendedName>
    <alternativeName>
        <fullName evidence="1">Crotonobetainyl-CoA:carnitine CoA-transferase</fullName>
    </alternativeName>
</protein>
<proteinExistence type="inferred from homology"/>
<accession>B1LFX1</accession>
<name>CAIB_ECOSM</name>
<feature type="chain" id="PRO_1000136252" description="L-carnitine CoA-transferase">
    <location>
        <begin position="1"/>
        <end position="405"/>
    </location>
</feature>
<feature type="active site" description="Nucleophile" evidence="1">
    <location>
        <position position="169"/>
    </location>
</feature>
<feature type="binding site" evidence="1">
    <location>
        <position position="97"/>
    </location>
    <ligand>
        <name>CoA</name>
        <dbReference type="ChEBI" id="CHEBI:57287"/>
    </ligand>
</feature>
<feature type="binding site" evidence="1">
    <location>
        <position position="104"/>
    </location>
    <ligand>
        <name>CoA</name>
        <dbReference type="ChEBI" id="CHEBI:57287"/>
    </ligand>
</feature>
<gene>
    <name evidence="1" type="primary">caiB</name>
    <name type="ordered locus">EcSMS35_0039</name>
</gene>
<keyword id="KW-0963">Cytoplasm</keyword>
<keyword id="KW-0808">Transferase</keyword>
<organism>
    <name type="scientific">Escherichia coli (strain SMS-3-5 / SECEC)</name>
    <dbReference type="NCBI Taxonomy" id="439855"/>
    <lineage>
        <taxon>Bacteria</taxon>
        <taxon>Pseudomonadati</taxon>
        <taxon>Pseudomonadota</taxon>
        <taxon>Gammaproteobacteria</taxon>
        <taxon>Enterobacterales</taxon>
        <taxon>Enterobacteriaceae</taxon>
        <taxon>Escherichia</taxon>
    </lineage>
</organism>
<comment type="function">
    <text evidence="1">Catalyzes the reversible transfer of the CoA moiety from gamma-butyrobetainyl-CoA to L-carnitine to generate L-carnitinyl-CoA and gamma-butyrobetaine. Is also able to catalyze the reversible transfer of the CoA moiety from gamma-butyrobetainyl-CoA or L-carnitinyl-CoA to crotonobetaine to generate crotonobetainyl-CoA.</text>
</comment>
<comment type="catalytic activity">
    <reaction evidence="1">
        <text>crotonobetainyl-CoA + (R)-carnitine = crotonobetaine + (R)-carnitinyl-CoA</text>
        <dbReference type="Rhea" id="RHEA:28526"/>
        <dbReference type="ChEBI" id="CHEBI:16347"/>
        <dbReference type="ChEBI" id="CHEBI:17237"/>
        <dbReference type="ChEBI" id="CHEBI:60932"/>
        <dbReference type="ChEBI" id="CHEBI:60933"/>
        <dbReference type="EC" id="2.8.3.21"/>
    </reaction>
</comment>
<comment type="catalytic activity">
    <reaction evidence="1">
        <text>4-(trimethylamino)butanoyl-CoA + (R)-carnitine = (R)-carnitinyl-CoA + 4-(trimethylamino)butanoate</text>
        <dbReference type="Rhea" id="RHEA:28418"/>
        <dbReference type="ChEBI" id="CHEBI:16244"/>
        <dbReference type="ChEBI" id="CHEBI:16347"/>
        <dbReference type="ChEBI" id="CHEBI:60932"/>
        <dbReference type="ChEBI" id="CHEBI:61513"/>
        <dbReference type="EC" id="2.8.3.21"/>
    </reaction>
</comment>
<comment type="pathway">
    <text evidence="1">Amine and polyamine metabolism; carnitine metabolism.</text>
</comment>
<comment type="subunit">
    <text evidence="1">Homodimer.</text>
</comment>
<comment type="subcellular location">
    <subcellularLocation>
        <location evidence="1">Cytoplasm</location>
    </subcellularLocation>
</comment>
<comment type="similarity">
    <text evidence="1">Belongs to the CoA-transferase III family. CaiB subfamily.</text>
</comment>
<reference key="1">
    <citation type="journal article" date="2008" name="J. Bacteriol.">
        <title>Insights into the environmental resistance gene pool from the genome sequence of the multidrug-resistant environmental isolate Escherichia coli SMS-3-5.</title>
        <authorList>
            <person name="Fricke W.F."/>
            <person name="Wright M.S."/>
            <person name="Lindell A.H."/>
            <person name="Harkins D.M."/>
            <person name="Baker-Austin C."/>
            <person name="Ravel J."/>
            <person name="Stepanauskas R."/>
        </authorList>
    </citation>
    <scope>NUCLEOTIDE SEQUENCE [LARGE SCALE GENOMIC DNA]</scope>
    <source>
        <strain>SMS-3-5 / SECEC</strain>
    </source>
</reference>
<dbReference type="EC" id="2.8.3.21" evidence="1"/>
<dbReference type="EMBL" id="CP000970">
    <property type="protein sequence ID" value="ACB17862.1"/>
    <property type="molecule type" value="Genomic_DNA"/>
</dbReference>
<dbReference type="RefSeq" id="WP_000349942.1">
    <property type="nucleotide sequence ID" value="NC_010498.1"/>
</dbReference>
<dbReference type="SMR" id="B1LFX1"/>
<dbReference type="KEGG" id="ecm:EcSMS35_0039"/>
<dbReference type="HOGENOM" id="CLU_033975_2_0_6"/>
<dbReference type="UniPathway" id="UPA00117"/>
<dbReference type="Proteomes" id="UP000007011">
    <property type="component" value="Chromosome"/>
</dbReference>
<dbReference type="GO" id="GO:0005737">
    <property type="term" value="C:cytoplasm"/>
    <property type="evidence" value="ECO:0007669"/>
    <property type="project" value="UniProtKB-SubCell"/>
</dbReference>
<dbReference type="GO" id="GO:0008735">
    <property type="term" value="F:L-carnitine CoA-transferase activity"/>
    <property type="evidence" value="ECO:0007669"/>
    <property type="project" value="RHEA"/>
</dbReference>
<dbReference type="GO" id="GO:0009437">
    <property type="term" value="P:carnitine metabolic process"/>
    <property type="evidence" value="ECO:0007669"/>
    <property type="project" value="UniProtKB-UniRule"/>
</dbReference>
<dbReference type="FunFam" id="3.30.1540.10:FF:000001">
    <property type="entry name" value="L-carnitine CoA-transferase"/>
    <property type="match status" value="1"/>
</dbReference>
<dbReference type="Gene3D" id="3.40.50.10540">
    <property type="entry name" value="Crotonobetainyl-coa:carnitine coa-transferase, domain 1"/>
    <property type="match status" value="1"/>
</dbReference>
<dbReference type="Gene3D" id="3.30.1540.10">
    <property type="entry name" value="formyl-coa transferase, domain 3"/>
    <property type="match status" value="1"/>
</dbReference>
<dbReference type="HAMAP" id="MF_01050">
    <property type="entry name" value="CaiB"/>
    <property type="match status" value="1"/>
</dbReference>
<dbReference type="InterPro" id="IPR050509">
    <property type="entry name" value="CoA-transferase_III"/>
</dbReference>
<dbReference type="InterPro" id="IPR023452">
    <property type="entry name" value="CoA-Trfase_CaiB"/>
</dbReference>
<dbReference type="InterPro" id="IPR003673">
    <property type="entry name" value="CoA-Trfase_fam_III"/>
</dbReference>
<dbReference type="InterPro" id="IPR044855">
    <property type="entry name" value="CoA-Trfase_III_dom3_sf"/>
</dbReference>
<dbReference type="InterPro" id="IPR023606">
    <property type="entry name" value="CoA-Trfase_III_dom_1_sf"/>
</dbReference>
<dbReference type="NCBIfam" id="NF002914">
    <property type="entry name" value="PRK03525.1"/>
    <property type="match status" value="1"/>
</dbReference>
<dbReference type="PANTHER" id="PTHR48228:SF6">
    <property type="entry name" value="L-CARNITINE COA-TRANSFERASE"/>
    <property type="match status" value="1"/>
</dbReference>
<dbReference type="PANTHER" id="PTHR48228">
    <property type="entry name" value="SUCCINYL-COA--D-CITRAMALATE COA-TRANSFERASE"/>
    <property type="match status" value="1"/>
</dbReference>
<dbReference type="Pfam" id="PF02515">
    <property type="entry name" value="CoA_transf_3"/>
    <property type="match status" value="1"/>
</dbReference>
<dbReference type="SUPFAM" id="SSF89796">
    <property type="entry name" value="CoA-transferase family III (CaiB/BaiF)"/>
    <property type="match status" value="1"/>
</dbReference>